<name>GSA_MYCLE</name>
<keyword id="KW-0963">Cytoplasm</keyword>
<keyword id="KW-0413">Isomerase</keyword>
<keyword id="KW-0627">Porphyrin biosynthesis</keyword>
<keyword id="KW-0663">Pyridoxal phosphate</keyword>
<keyword id="KW-1185">Reference proteome</keyword>
<gene>
    <name type="primary">hemL</name>
    <name type="synonym">gsa</name>
    <name type="ordered locus">ML2414</name>
    <name type="ORF">B2168_C1_190</name>
</gene>
<sequence>MGSTDQATAPAGPAVSISAKLFEDACAVIPGGVNSPVRAFSAVGGTPLFITEARGCWLTDADGRRYVDLVCSWGPMILGHAHPAVVDAVATVAASGLSFGAPTPAETQLAAEIIGRMAPVERIRLVNSGTEATMSAVRLARGFTGRTKIIKFSGCYHGHVDALLADAGSGVATLSLPSSPGVTGAAAADTIVLPYNDIEAVRQTFARLGDQIAAVITEASPGNMGVVPPAPGYNAALRAITAEHGALLIIDEVMTGFRVSRSGWYGLDPVAADLFIFGKVMSGGMPAAAFGGRAEVMERLAPLGPVYQAGTLSGNPVAMAAGLATLRAAADAVYATLDRNADRLVAMLSEALTDAGVPHQIPRAGNMFSVFFSEAPVTDFASACNSQVWRYPAFFHALLDAGVYPPCSTFEAWFVSAALDDAAFGRIVDALPGAAAAAVAARHRES</sequence>
<comment type="catalytic activity">
    <reaction>
        <text>(S)-4-amino-5-oxopentanoate = 5-aminolevulinate</text>
        <dbReference type="Rhea" id="RHEA:14265"/>
        <dbReference type="ChEBI" id="CHEBI:57501"/>
        <dbReference type="ChEBI" id="CHEBI:356416"/>
        <dbReference type="EC" id="5.4.3.8"/>
    </reaction>
</comment>
<comment type="cofactor">
    <cofactor evidence="1">
        <name>pyridoxal 5'-phosphate</name>
        <dbReference type="ChEBI" id="CHEBI:597326"/>
    </cofactor>
</comment>
<comment type="pathway">
    <text>Porphyrin-containing compound metabolism; protoporphyrin-IX biosynthesis; 5-aminolevulinate from L-glutamyl-tRNA(Glu): step 2/2.</text>
</comment>
<comment type="subunit">
    <text evidence="1">Homodimer.</text>
</comment>
<comment type="subcellular location">
    <subcellularLocation>
        <location evidence="2">Cytoplasm</location>
    </subcellularLocation>
</comment>
<comment type="similarity">
    <text evidence="2">Belongs to the class-III pyridoxal-phosphate-dependent aminotransferase family. HemL subfamily.</text>
</comment>
<organism>
    <name type="scientific">Mycobacterium leprae (strain TN)</name>
    <dbReference type="NCBI Taxonomy" id="272631"/>
    <lineage>
        <taxon>Bacteria</taxon>
        <taxon>Bacillati</taxon>
        <taxon>Actinomycetota</taxon>
        <taxon>Actinomycetes</taxon>
        <taxon>Mycobacteriales</taxon>
        <taxon>Mycobacteriaceae</taxon>
        <taxon>Mycobacterium</taxon>
    </lineage>
</organism>
<dbReference type="EC" id="5.4.3.8"/>
<dbReference type="EMBL" id="U00018">
    <property type="protein sequence ID" value="AAA17225.1"/>
    <property type="molecule type" value="Genomic_DNA"/>
</dbReference>
<dbReference type="EMBL" id="AL583925">
    <property type="protein sequence ID" value="CAC31930.1"/>
    <property type="molecule type" value="Genomic_DNA"/>
</dbReference>
<dbReference type="PIR" id="S72889">
    <property type="entry name" value="S72889"/>
</dbReference>
<dbReference type="RefSeq" id="NP_302563.1">
    <property type="nucleotide sequence ID" value="NC_002677.1"/>
</dbReference>
<dbReference type="RefSeq" id="WP_010908883.1">
    <property type="nucleotide sequence ID" value="NC_002677.1"/>
</dbReference>
<dbReference type="SMR" id="P46716"/>
<dbReference type="STRING" id="272631.gene:17576276"/>
<dbReference type="KEGG" id="mle:ML2414"/>
<dbReference type="PATRIC" id="fig|272631.5.peg.4640"/>
<dbReference type="Leproma" id="ML2414"/>
<dbReference type="eggNOG" id="COG0001">
    <property type="taxonomic scope" value="Bacteria"/>
</dbReference>
<dbReference type="HOGENOM" id="CLU_016922_1_5_11"/>
<dbReference type="OrthoDB" id="9801052at2"/>
<dbReference type="UniPathway" id="UPA00251">
    <property type="reaction ID" value="UER00317"/>
</dbReference>
<dbReference type="Proteomes" id="UP000000806">
    <property type="component" value="Chromosome"/>
</dbReference>
<dbReference type="GO" id="GO:0005737">
    <property type="term" value="C:cytoplasm"/>
    <property type="evidence" value="ECO:0007669"/>
    <property type="project" value="UniProtKB-SubCell"/>
</dbReference>
<dbReference type="GO" id="GO:0042286">
    <property type="term" value="F:glutamate-1-semialdehyde 2,1-aminomutase activity"/>
    <property type="evidence" value="ECO:0007669"/>
    <property type="project" value="UniProtKB-UniRule"/>
</dbReference>
<dbReference type="GO" id="GO:0030170">
    <property type="term" value="F:pyridoxal phosphate binding"/>
    <property type="evidence" value="ECO:0007669"/>
    <property type="project" value="InterPro"/>
</dbReference>
<dbReference type="GO" id="GO:0008483">
    <property type="term" value="F:transaminase activity"/>
    <property type="evidence" value="ECO:0007669"/>
    <property type="project" value="InterPro"/>
</dbReference>
<dbReference type="GO" id="GO:0006782">
    <property type="term" value="P:protoporphyrinogen IX biosynthetic process"/>
    <property type="evidence" value="ECO:0007669"/>
    <property type="project" value="UniProtKB-UniRule"/>
</dbReference>
<dbReference type="CDD" id="cd00610">
    <property type="entry name" value="OAT_like"/>
    <property type="match status" value="1"/>
</dbReference>
<dbReference type="FunFam" id="3.40.640.10:FF:000021">
    <property type="entry name" value="Glutamate-1-semialdehyde 2,1-aminomutase"/>
    <property type="match status" value="1"/>
</dbReference>
<dbReference type="Gene3D" id="3.90.1150.10">
    <property type="entry name" value="Aspartate Aminotransferase, domain 1"/>
    <property type="match status" value="1"/>
</dbReference>
<dbReference type="Gene3D" id="3.40.640.10">
    <property type="entry name" value="Type I PLP-dependent aspartate aminotransferase-like (Major domain)"/>
    <property type="match status" value="1"/>
</dbReference>
<dbReference type="HAMAP" id="MF_00375">
    <property type="entry name" value="HemL_aminotrans_3"/>
    <property type="match status" value="1"/>
</dbReference>
<dbReference type="InterPro" id="IPR004639">
    <property type="entry name" value="4pyrrol_synth_GluAld_NH2Trfase"/>
</dbReference>
<dbReference type="InterPro" id="IPR005814">
    <property type="entry name" value="Aminotrans_3"/>
</dbReference>
<dbReference type="InterPro" id="IPR049704">
    <property type="entry name" value="Aminotrans_3_PPA_site"/>
</dbReference>
<dbReference type="InterPro" id="IPR015424">
    <property type="entry name" value="PyrdxlP-dep_Trfase"/>
</dbReference>
<dbReference type="InterPro" id="IPR015421">
    <property type="entry name" value="PyrdxlP-dep_Trfase_major"/>
</dbReference>
<dbReference type="InterPro" id="IPR015422">
    <property type="entry name" value="PyrdxlP-dep_Trfase_small"/>
</dbReference>
<dbReference type="NCBIfam" id="TIGR00713">
    <property type="entry name" value="hemL"/>
    <property type="match status" value="1"/>
</dbReference>
<dbReference type="NCBIfam" id="NF000818">
    <property type="entry name" value="PRK00062.1"/>
    <property type="match status" value="1"/>
</dbReference>
<dbReference type="PANTHER" id="PTHR43713">
    <property type="entry name" value="GLUTAMATE-1-SEMIALDEHYDE 2,1-AMINOMUTASE"/>
    <property type="match status" value="1"/>
</dbReference>
<dbReference type="PANTHER" id="PTHR43713:SF3">
    <property type="entry name" value="GLUTAMATE-1-SEMIALDEHYDE 2,1-AMINOMUTASE 1, CHLOROPLASTIC-RELATED"/>
    <property type="match status" value="1"/>
</dbReference>
<dbReference type="Pfam" id="PF00202">
    <property type="entry name" value="Aminotran_3"/>
    <property type="match status" value="1"/>
</dbReference>
<dbReference type="SUPFAM" id="SSF53383">
    <property type="entry name" value="PLP-dependent transferases"/>
    <property type="match status" value="1"/>
</dbReference>
<dbReference type="PROSITE" id="PS00600">
    <property type="entry name" value="AA_TRANSFER_CLASS_3"/>
    <property type="match status" value="1"/>
</dbReference>
<accession>P46716</accession>
<protein>
    <recommendedName>
        <fullName>Glutamate-1-semialdehyde 2,1-aminomutase</fullName>
        <shortName>GSA</shortName>
        <ecNumber>5.4.3.8</ecNumber>
    </recommendedName>
    <alternativeName>
        <fullName>Glutamate-1-semialdehyde aminotransferase</fullName>
        <shortName>GSA-AT</shortName>
    </alternativeName>
</protein>
<feature type="chain" id="PRO_0000120424" description="Glutamate-1-semialdehyde 2,1-aminomutase">
    <location>
        <begin position="1"/>
        <end position="446"/>
    </location>
</feature>
<feature type="modified residue" description="N6-(pyridoxal phosphate)lysine" evidence="1">
    <location>
        <position position="279"/>
    </location>
</feature>
<evidence type="ECO:0000250" key="1"/>
<evidence type="ECO:0000305" key="2"/>
<proteinExistence type="inferred from homology"/>
<reference key="1">
    <citation type="submission" date="1994-03" db="EMBL/GenBank/DDBJ databases">
        <authorList>
            <person name="Smith D.R."/>
            <person name="Robison K."/>
        </authorList>
    </citation>
    <scope>NUCLEOTIDE SEQUENCE [GENOMIC DNA]</scope>
</reference>
<reference key="2">
    <citation type="journal article" date="2001" name="Nature">
        <title>Massive gene decay in the leprosy bacillus.</title>
        <authorList>
            <person name="Cole S.T."/>
            <person name="Eiglmeier K."/>
            <person name="Parkhill J."/>
            <person name="James K.D."/>
            <person name="Thomson N.R."/>
            <person name="Wheeler P.R."/>
            <person name="Honore N."/>
            <person name="Garnier T."/>
            <person name="Churcher C.M."/>
            <person name="Harris D.E."/>
            <person name="Mungall K.L."/>
            <person name="Basham D."/>
            <person name="Brown D."/>
            <person name="Chillingworth T."/>
            <person name="Connor R."/>
            <person name="Davies R.M."/>
            <person name="Devlin K."/>
            <person name="Duthoy S."/>
            <person name="Feltwell T."/>
            <person name="Fraser A."/>
            <person name="Hamlin N."/>
            <person name="Holroyd S."/>
            <person name="Hornsby T."/>
            <person name="Jagels K."/>
            <person name="Lacroix C."/>
            <person name="Maclean J."/>
            <person name="Moule S."/>
            <person name="Murphy L.D."/>
            <person name="Oliver K."/>
            <person name="Quail M.A."/>
            <person name="Rajandream M.A."/>
            <person name="Rutherford K.M."/>
            <person name="Rutter S."/>
            <person name="Seeger K."/>
            <person name="Simon S."/>
            <person name="Simmonds M."/>
            <person name="Skelton J."/>
            <person name="Squares R."/>
            <person name="Squares S."/>
            <person name="Stevens K."/>
            <person name="Taylor K."/>
            <person name="Whitehead S."/>
            <person name="Woodward J.R."/>
            <person name="Barrell B.G."/>
        </authorList>
    </citation>
    <scope>NUCLEOTIDE SEQUENCE [LARGE SCALE GENOMIC DNA]</scope>
    <source>
        <strain>TN</strain>
    </source>
</reference>